<proteinExistence type="inferred from homology"/>
<feature type="chain" id="PRO_0000209306" description="UPF0250 protein PA3998">
    <location>
        <begin position="1"/>
        <end position="93"/>
    </location>
</feature>
<gene>
    <name type="ordered locus">PA3998</name>
</gene>
<evidence type="ECO:0000255" key="1">
    <source>
        <dbReference type="HAMAP-Rule" id="MF_00659"/>
    </source>
</evidence>
<dbReference type="EMBL" id="AF147448">
    <property type="protein sequence ID" value="AAD32235.1"/>
    <property type="molecule type" value="Genomic_DNA"/>
</dbReference>
<dbReference type="EMBL" id="AE004091">
    <property type="protein sequence ID" value="AAG07385.1"/>
    <property type="molecule type" value="Genomic_DNA"/>
</dbReference>
<dbReference type="PIR" id="B83146">
    <property type="entry name" value="B83146"/>
</dbReference>
<dbReference type="RefSeq" id="NP_252687.1">
    <property type="nucleotide sequence ID" value="NC_002516.2"/>
</dbReference>
<dbReference type="RefSeq" id="WP_003100311.1">
    <property type="nucleotide sequence ID" value="NZ_QZGE01000038.1"/>
</dbReference>
<dbReference type="SMR" id="Q9X6V8"/>
<dbReference type="FunCoup" id="Q9X6V8">
    <property type="interactions" value="204"/>
</dbReference>
<dbReference type="STRING" id="208964.PA3998"/>
<dbReference type="PaxDb" id="208964-PA3998"/>
<dbReference type="GeneID" id="878953"/>
<dbReference type="KEGG" id="pae:PA3998"/>
<dbReference type="PATRIC" id="fig|208964.12.peg.4190"/>
<dbReference type="PseudoCAP" id="PA3998"/>
<dbReference type="HOGENOM" id="CLU_161438_1_0_6"/>
<dbReference type="InParanoid" id="Q9X6V8"/>
<dbReference type="OrthoDB" id="9793424at2"/>
<dbReference type="PhylomeDB" id="Q9X6V8"/>
<dbReference type="BioCyc" id="PAER208964:G1FZ6-4071-MONOMER"/>
<dbReference type="Proteomes" id="UP000002438">
    <property type="component" value="Chromosome"/>
</dbReference>
<dbReference type="GO" id="GO:0005829">
    <property type="term" value="C:cytosol"/>
    <property type="evidence" value="ECO:0000318"/>
    <property type="project" value="GO_Central"/>
</dbReference>
<dbReference type="FunFam" id="3.30.70.260:FF:000079">
    <property type="entry name" value="UPF0250 protein NCTC10783_06313"/>
    <property type="match status" value="1"/>
</dbReference>
<dbReference type="Gene3D" id="3.30.70.260">
    <property type="match status" value="1"/>
</dbReference>
<dbReference type="HAMAP" id="MF_00659">
    <property type="entry name" value="UPF0250"/>
    <property type="match status" value="1"/>
</dbReference>
<dbReference type="InterPro" id="IPR007454">
    <property type="entry name" value="UPF0250_YbeD-like"/>
</dbReference>
<dbReference type="InterPro" id="IPR027471">
    <property type="entry name" value="YbeD-like_sf"/>
</dbReference>
<dbReference type="NCBIfam" id="NF001486">
    <property type="entry name" value="PRK00341.1"/>
    <property type="match status" value="1"/>
</dbReference>
<dbReference type="PANTHER" id="PTHR38036">
    <property type="entry name" value="UPF0250 PROTEIN YBED"/>
    <property type="match status" value="1"/>
</dbReference>
<dbReference type="PANTHER" id="PTHR38036:SF1">
    <property type="entry name" value="UPF0250 PROTEIN YBED"/>
    <property type="match status" value="1"/>
</dbReference>
<dbReference type="Pfam" id="PF04359">
    <property type="entry name" value="DUF493"/>
    <property type="match status" value="1"/>
</dbReference>
<dbReference type="SUPFAM" id="SSF117991">
    <property type="entry name" value="YbeD/HP0495-like"/>
    <property type="match status" value="1"/>
</dbReference>
<name>Y3998_PSEAE</name>
<sequence>MTDTPDVQPPKIEFPCERYPIKVIGDAGEGFSDLVVEIIQRHAPDLDVETLVVRDSSKGRFLSVQVLITATDVDQLQAIHNDLRATGRVHMVL</sequence>
<comment type="similarity">
    <text evidence="1">Belongs to the UPF0250 family.</text>
</comment>
<reference key="1">
    <citation type="submission" date="1999-05" db="EMBL/GenBank/DDBJ databases">
        <title>Cloning and characterization of PBP5 of Pseudomonas aeruginosa.</title>
        <authorList>
            <person name="Gagnon L.A."/>
            <person name="Castro-Urbina I.M."/>
            <person name="Liao X."/>
            <person name="Hancock R.E.W."/>
            <person name="Clarke A.J."/>
            <person name="Huletsky A."/>
        </authorList>
    </citation>
    <scope>NUCLEOTIDE SEQUENCE [GENOMIC DNA]</scope>
    <source>
        <strain>ATCC 15692 / DSM 22644 / CIP 104116 / JCM 14847 / LMG 12228 / 1C / PRS 101 / PAO1</strain>
    </source>
</reference>
<reference key="2">
    <citation type="journal article" date="2000" name="Nature">
        <title>Complete genome sequence of Pseudomonas aeruginosa PAO1, an opportunistic pathogen.</title>
        <authorList>
            <person name="Stover C.K."/>
            <person name="Pham X.-Q.T."/>
            <person name="Erwin A.L."/>
            <person name="Mizoguchi S.D."/>
            <person name="Warrener P."/>
            <person name="Hickey M.J."/>
            <person name="Brinkman F.S.L."/>
            <person name="Hufnagle W.O."/>
            <person name="Kowalik D.J."/>
            <person name="Lagrou M."/>
            <person name="Garber R.L."/>
            <person name="Goltry L."/>
            <person name="Tolentino E."/>
            <person name="Westbrock-Wadman S."/>
            <person name="Yuan Y."/>
            <person name="Brody L.L."/>
            <person name="Coulter S.N."/>
            <person name="Folger K.R."/>
            <person name="Kas A."/>
            <person name="Larbig K."/>
            <person name="Lim R.M."/>
            <person name="Smith K.A."/>
            <person name="Spencer D.H."/>
            <person name="Wong G.K.-S."/>
            <person name="Wu Z."/>
            <person name="Paulsen I.T."/>
            <person name="Reizer J."/>
            <person name="Saier M.H. Jr."/>
            <person name="Hancock R.E.W."/>
            <person name="Lory S."/>
            <person name="Olson M.V."/>
        </authorList>
    </citation>
    <scope>NUCLEOTIDE SEQUENCE [LARGE SCALE GENOMIC DNA]</scope>
    <source>
        <strain>ATCC 15692 / DSM 22644 / CIP 104116 / JCM 14847 / LMG 12228 / 1C / PRS 101 / PAO1</strain>
    </source>
</reference>
<accession>Q9X6V8</accession>
<keyword id="KW-1185">Reference proteome</keyword>
<organism>
    <name type="scientific">Pseudomonas aeruginosa (strain ATCC 15692 / DSM 22644 / CIP 104116 / JCM 14847 / LMG 12228 / 1C / PRS 101 / PAO1)</name>
    <dbReference type="NCBI Taxonomy" id="208964"/>
    <lineage>
        <taxon>Bacteria</taxon>
        <taxon>Pseudomonadati</taxon>
        <taxon>Pseudomonadota</taxon>
        <taxon>Gammaproteobacteria</taxon>
        <taxon>Pseudomonadales</taxon>
        <taxon>Pseudomonadaceae</taxon>
        <taxon>Pseudomonas</taxon>
    </lineage>
</organism>
<protein>
    <recommendedName>
        <fullName evidence="1">UPF0250 protein PA3998</fullName>
    </recommendedName>
</protein>